<evidence type="ECO:0000255" key="1">
    <source>
        <dbReference type="HAMAP-Rule" id="MF_00500"/>
    </source>
</evidence>
<evidence type="ECO:0000256" key="2">
    <source>
        <dbReference type="SAM" id="MobiDB-lite"/>
    </source>
</evidence>
<evidence type="ECO:0000305" key="3"/>
<proteinExistence type="inferred from homology"/>
<gene>
    <name evidence="1" type="primary">rpsT</name>
    <name type="ordered locus">SRU_0907</name>
</gene>
<name>RS20_SALRD</name>
<accession>Q2S440</accession>
<comment type="function">
    <text evidence="1">Binds directly to 16S ribosomal RNA.</text>
</comment>
<comment type="similarity">
    <text evidence="1">Belongs to the bacterial ribosomal protein bS20 family.</text>
</comment>
<comment type="sequence caution" evidence="3">
    <conflict type="erroneous initiation">
        <sequence resource="EMBL-CDS" id="ABC44979"/>
    </conflict>
</comment>
<feature type="chain" id="PRO_0000236450" description="Small ribosomal subunit protein bS20">
    <location>
        <begin position="1"/>
        <end position="84"/>
    </location>
</feature>
<feature type="region of interest" description="Disordered" evidence="2">
    <location>
        <begin position="1"/>
        <end position="32"/>
    </location>
</feature>
<keyword id="KW-1185">Reference proteome</keyword>
<keyword id="KW-0687">Ribonucleoprotein</keyword>
<keyword id="KW-0689">Ribosomal protein</keyword>
<keyword id="KW-0694">RNA-binding</keyword>
<keyword id="KW-0699">rRNA-binding</keyword>
<protein>
    <recommendedName>
        <fullName evidence="1">Small ribosomal subunit protein bS20</fullName>
    </recommendedName>
    <alternativeName>
        <fullName evidence="3">30S ribosomal protein S20</fullName>
    </alternativeName>
</protein>
<organism>
    <name type="scientific">Salinibacter ruber (strain DSM 13855 / M31)</name>
    <dbReference type="NCBI Taxonomy" id="309807"/>
    <lineage>
        <taxon>Bacteria</taxon>
        <taxon>Pseudomonadati</taxon>
        <taxon>Rhodothermota</taxon>
        <taxon>Rhodothermia</taxon>
        <taxon>Rhodothermales</taxon>
        <taxon>Salinibacteraceae</taxon>
        <taxon>Salinibacter</taxon>
    </lineage>
</organism>
<reference key="1">
    <citation type="journal article" date="2005" name="Proc. Natl. Acad. Sci. U.S.A.">
        <title>The genome of Salinibacter ruber: convergence and gene exchange among hyperhalophilic bacteria and archaea.</title>
        <authorList>
            <person name="Mongodin E.F."/>
            <person name="Nelson K.E."/>
            <person name="Daugherty S."/>
            <person name="DeBoy R.T."/>
            <person name="Wister J."/>
            <person name="Khouri H."/>
            <person name="Weidman J."/>
            <person name="Walsh D.A."/>
            <person name="Papke R.T."/>
            <person name="Sanchez Perez G."/>
            <person name="Sharma A.K."/>
            <person name="Nesbo C.L."/>
            <person name="MacLeod D."/>
            <person name="Bapteste E."/>
            <person name="Doolittle W.F."/>
            <person name="Charlebois R.L."/>
            <person name="Legault B."/>
            <person name="Rodriguez-Valera F."/>
        </authorList>
    </citation>
    <scope>NUCLEOTIDE SEQUENCE [LARGE SCALE GENOMIC DNA]</scope>
    <source>
        <strain>DSM 13855 / CECT 5946 / M31</strain>
    </source>
</reference>
<dbReference type="EMBL" id="CP000159">
    <property type="protein sequence ID" value="ABC44979.1"/>
    <property type="status" value="ALT_INIT"/>
    <property type="molecule type" value="Genomic_DNA"/>
</dbReference>
<dbReference type="RefSeq" id="WP_013061505.1">
    <property type="nucleotide sequence ID" value="NC_007677.1"/>
</dbReference>
<dbReference type="RefSeq" id="YP_445041.1">
    <property type="nucleotide sequence ID" value="NC_007677.1"/>
</dbReference>
<dbReference type="SMR" id="Q2S440"/>
<dbReference type="STRING" id="309807.SRU_0907"/>
<dbReference type="EnsemblBacteria" id="ABC44979">
    <property type="protein sequence ID" value="ABC44979"/>
    <property type="gene ID" value="SRU_0907"/>
</dbReference>
<dbReference type="KEGG" id="sru:SRU_0907"/>
<dbReference type="eggNOG" id="COG0268">
    <property type="taxonomic scope" value="Bacteria"/>
</dbReference>
<dbReference type="HOGENOM" id="CLU_160655_3_2_10"/>
<dbReference type="OrthoDB" id="9808392at2"/>
<dbReference type="Proteomes" id="UP000008674">
    <property type="component" value="Chromosome"/>
</dbReference>
<dbReference type="GO" id="GO:0005829">
    <property type="term" value="C:cytosol"/>
    <property type="evidence" value="ECO:0007669"/>
    <property type="project" value="TreeGrafter"/>
</dbReference>
<dbReference type="GO" id="GO:0015935">
    <property type="term" value="C:small ribosomal subunit"/>
    <property type="evidence" value="ECO:0007669"/>
    <property type="project" value="TreeGrafter"/>
</dbReference>
<dbReference type="GO" id="GO:0070181">
    <property type="term" value="F:small ribosomal subunit rRNA binding"/>
    <property type="evidence" value="ECO:0007669"/>
    <property type="project" value="TreeGrafter"/>
</dbReference>
<dbReference type="GO" id="GO:0003735">
    <property type="term" value="F:structural constituent of ribosome"/>
    <property type="evidence" value="ECO:0007669"/>
    <property type="project" value="InterPro"/>
</dbReference>
<dbReference type="GO" id="GO:0006412">
    <property type="term" value="P:translation"/>
    <property type="evidence" value="ECO:0007669"/>
    <property type="project" value="UniProtKB-UniRule"/>
</dbReference>
<dbReference type="FunFam" id="1.20.58.110:FF:000001">
    <property type="entry name" value="30S ribosomal protein S20"/>
    <property type="match status" value="1"/>
</dbReference>
<dbReference type="Gene3D" id="1.20.58.110">
    <property type="entry name" value="Ribosomal protein S20"/>
    <property type="match status" value="1"/>
</dbReference>
<dbReference type="HAMAP" id="MF_00500">
    <property type="entry name" value="Ribosomal_bS20"/>
    <property type="match status" value="1"/>
</dbReference>
<dbReference type="InterPro" id="IPR002583">
    <property type="entry name" value="Ribosomal_bS20"/>
</dbReference>
<dbReference type="InterPro" id="IPR036510">
    <property type="entry name" value="Ribosomal_bS20_sf"/>
</dbReference>
<dbReference type="NCBIfam" id="TIGR00029">
    <property type="entry name" value="S20"/>
    <property type="match status" value="1"/>
</dbReference>
<dbReference type="PANTHER" id="PTHR33398">
    <property type="entry name" value="30S RIBOSOMAL PROTEIN S20"/>
    <property type="match status" value="1"/>
</dbReference>
<dbReference type="PANTHER" id="PTHR33398:SF1">
    <property type="entry name" value="SMALL RIBOSOMAL SUBUNIT PROTEIN BS20C"/>
    <property type="match status" value="1"/>
</dbReference>
<dbReference type="Pfam" id="PF01649">
    <property type="entry name" value="Ribosomal_S20p"/>
    <property type="match status" value="1"/>
</dbReference>
<dbReference type="SUPFAM" id="SSF46992">
    <property type="entry name" value="Ribosomal protein S20"/>
    <property type="match status" value="1"/>
</dbReference>
<sequence length="84" mass="9872">MPRHESAKKRMRQNEKRQKRNKSQKSRVRTKIKTLRSLDDKEEAEELLNDVKGDLDRLAAKGIIHENKAANRKSKLEKHVDALE</sequence>